<keyword id="KW-0025">Alternative splicing</keyword>
<keyword id="KW-0150">Chloroplast</keyword>
<keyword id="KW-0472">Membrane</keyword>
<keyword id="KW-0934">Plastid</keyword>
<keyword id="KW-1185">Reference proteome</keyword>
<keyword id="KW-0809">Transit peptide</keyword>
<keyword id="KW-0812">Transmembrane</keyword>
<keyword id="KW-1133">Transmembrane helix</keyword>
<reference key="1">
    <citation type="journal article" date="1999" name="Nature">
        <title>Sequence and analysis of chromosome 4 of the plant Arabidopsis thaliana.</title>
        <authorList>
            <person name="Mayer K.F.X."/>
            <person name="Schueller C."/>
            <person name="Wambutt R."/>
            <person name="Murphy G."/>
            <person name="Volckaert G."/>
            <person name="Pohl T."/>
            <person name="Duesterhoeft A."/>
            <person name="Stiekema W."/>
            <person name="Entian K.-D."/>
            <person name="Terryn N."/>
            <person name="Harris B."/>
            <person name="Ansorge W."/>
            <person name="Brandt P."/>
            <person name="Grivell L.A."/>
            <person name="Rieger M."/>
            <person name="Weichselgartner M."/>
            <person name="de Simone V."/>
            <person name="Obermaier B."/>
            <person name="Mache R."/>
            <person name="Mueller M."/>
            <person name="Kreis M."/>
            <person name="Delseny M."/>
            <person name="Puigdomenech P."/>
            <person name="Watson M."/>
            <person name="Schmidtheini T."/>
            <person name="Reichert B."/>
            <person name="Portetelle D."/>
            <person name="Perez-Alonso M."/>
            <person name="Boutry M."/>
            <person name="Bancroft I."/>
            <person name="Vos P."/>
            <person name="Hoheisel J."/>
            <person name="Zimmermann W."/>
            <person name="Wedler H."/>
            <person name="Ridley P."/>
            <person name="Langham S.-A."/>
            <person name="McCullagh B."/>
            <person name="Bilham L."/>
            <person name="Robben J."/>
            <person name="van der Schueren J."/>
            <person name="Grymonprez B."/>
            <person name="Chuang Y.-J."/>
            <person name="Vandenbussche F."/>
            <person name="Braeken M."/>
            <person name="Weltjens I."/>
            <person name="Voet M."/>
            <person name="Bastiaens I."/>
            <person name="Aert R."/>
            <person name="Defoor E."/>
            <person name="Weitzenegger T."/>
            <person name="Bothe G."/>
            <person name="Ramsperger U."/>
            <person name="Hilbert H."/>
            <person name="Braun M."/>
            <person name="Holzer E."/>
            <person name="Brandt A."/>
            <person name="Peters S."/>
            <person name="van Staveren M."/>
            <person name="Dirkse W."/>
            <person name="Mooijman P."/>
            <person name="Klein Lankhorst R."/>
            <person name="Rose M."/>
            <person name="Hauf J."/>
            <person name="Koetter P."/>
            <person name="Berneiser S."/>
            <person name="Hempel S."/>
            <person name="Feldpausch M."/>
            <person name="Lamberth S."/>
            <person name="Van den Daele H."/>
            <person name="De Keyser A."/>
            <person name="Buysshaert C."/>
            <person name="Gielen J."/>
            <person name="Villarroel R."/>
            <person name="De Clercq R."/>
            <person name="van Montagu M."/>
            <person name="Rogers J."/>
            <person name="Cronin A."/>
            <person name="Quail M.A."/>
            <person name="Bray-Allen S."/>
            <person name="Clark L."/>
            <person name="Doggett J."/>
            <person name="Hall S."/>
            <person name="Kay M."/>
            <person name="Lennard N."/>
            <person name="McLay K."/>
            <person name="Mayes R."/>
            <person name="Pettett A."/>
            <person name="Rajandream M.A."/>
            <person name="Lyne M."/>
            <person name="Benes V."/>
            <person name="Rechmann S."/>
            <person name="Borkova D."/>
            <person name="Bloecker H."/>
            <person name="Scharfe M."/>
            <person name="Grimm M."/>
            <person name="Loehnert T.-H."/>
            <person name="Dose S."/>
            <person name="de Haan M."/>
            <person name="Maarse A.C."/>
            <person name="Schaefer M."/>
            <person name="Mueller-Auer S."/>
            <person name="Gabel C."/>
            <person name="Fuchs M."/>
            <person name="Fartmann B."/>
            <person name="Granderath K."/>
            <person name="Dauner D."/>
            <person name="Herzl A."/>
            <person name="Neumann S."/>
            <person name="Argiriou A."/>
            <person name="Vitale D."/>
            <person name="Liguori R."/>
            <person name="Piravandi E."/>
            <person name="Massenet O."/>
            <person name="Quigley F."/>
            <person name="Clabauld G."/>
            <person name="Muendlein A."/>
            <person name="Felber R."/>
            <person name="Schnabl S."/>
            <person name="Hiller R."/>
            <person name="Schmidt W."/>
            <person name="Lecharny A."/>
            <person name="Aubourg S."/>
            <person name="Chefdor F."/>
            <person name="Cooke R."/>
            <person name="Berger C."/>
            <person name="Monfort A."/>
            <person name="Casacuberta E."/>
            <person name="Gibbons T."/>
            <person name="Weber N."/>
            <person name="Vandenbol M."/>
            <person name="Bargues M."/>
            <person name="Terol J."/>
            <person name="Torres A."/>
            <person name="Perez-Perez A."/>
            <person name="Purnelle B."/>
            <person name="Bent E."/>
            <person name="Johnson S."/>
            <person name="Tacon D."/>
            <person name="Jesse T."/>
            <person name="Heijnen L."/>
            <person name="Schwarz S."/>
            <person name="Scholler P."/>
            <person name="Heber S."/>
            <person name="Francs P."/>
            <person name="Bielke C."/>
            <person name="Frishman D."/>
            <person name="Haase D."/>
            <person name="Lemcke K."/>
            <person name="Mewes H.-W."/>
            <person name="Stocker S."/>
            <person name="Zaccaria P."/>
            <person name="Bevan M."/>
            <person name="Wilson R.K."/>
            <person name="de la Bastide M."/>
            <person name="Habermann K."/>
            <person name="Parnell L."/>
            <person name="Dedhia N."/>
            <person name="Gnoj L."/>
            <person name="Schutz K."/>
            <person name="Huang E."/>
            <person name="Spiegel L."/>
            <person name="Sekhon M."/>
            <person name="Murray J."/>
            <person name="Sheet P."/>
            <person name="Cordes M."/>
            <person name="Abu-Threideh J."/>
            <person name="Stoneking T."/>
            <person name="Kalicki J."/>
            <person name="Graves T."/>
            <person name="Harmon G."/>
            <person name="Edwards J."/>
            <person name="Latreille P."/>
            <person name="Courtney L."/>
            <person name="Cloud J."/>
            <person name="Abbott A."/>
            <person name="Scott K."/>
            <person name="Johnson D."/>
            <person name="Minx P."/>
            <person name="Bentley D."/>
            <person name="Fulton B."/>
            <person name="Miller N."/>
            <person name="Greco T."/>
            <person name="Kemp K."/>
            <person name="Kramer J."/>
            <person name="Fulton L."/>
            <person name="Mardis E."/>
            <person name="Dante M."/>
            <person name="Pepin K."/>
            <person name="Hillier L.W."/>
            <person name="Nelson J."/>
            <person name="Spieth J."/>
            <person name="Ryan E."/>
            <person name="Andrews S."/>
            <person name="Geisel C."/>
            <person name="Layman D."/>
            <person name="Du H."/>
            <person name="Ali J."/>
            <person name="Berghoff A."/>
            <person name="Jones K."/>
            <person name="Drone K."/>
            <person name="Cotton M."/>
            <person name="Joshu C."/>
            <person name="Antonoiu B."/>
            <person name="Zidanic M."/>
            <person name="Strong C."/>
            <person name="Sun H."/>
            <person name="Lamar B."/>
            <person name="Yordan C."/>
            <person name="Ma P."/>
            <person name="Zhong J."/>
            <person name="Preston R."/>
            <person name="Vil D."/>
            <person name="Shekher M."/>
            <person name="Matero A."/>
            <person name="Shah R."/>
            <person name="Swaby I.K."/>
            <person name="O'Shaughnessy A."/>
            <person name="Rodriguez M."/>
            <person name="Hoffman J."/>
            <person name="Till S."/>
            <person name="Granat S."/>
            <person name="Shohdy N."/>
            <person name="Hasegawa A."/>
            <person name="Hameed A."/>
            <person name="Lodhi M."/>
            <person name="Johnson A."/>
            <person name="Chen E."/>
            <person name="Marra M.A."/>
            <person name="Martienssen R."/>
            <person name="McCombie W.R."/>
        </authorList>
    </citation>
    <scope>NUCLEOTIDE SEQUENCE [LARGE SCALE GENOMIC DNA]</scope>
    <source>
        <strain>cv. Columbia</strain>
    </source>
</reference>
<reference key="2">
    <citation type="journal article" date="2017" name="Plant J.">
        <title>Araport11: a complete reannotation of the Arabidopsis thaliana reference genome.</title>
        <authorList>
            <person name="Cheng C.Y."/>
            <person name="Krishnakumar V."/>
            <person name="Chan A.P."/>
            <person name="Thibaud-Nissen F."/>
            <person name="Schobel S."/>
            <person name="Town C.D."/>
        </authorList>
    </citation>
    <scope>GENOME REANNOTATION</scope>
    <source>
        <strain>cv. Columbia</strain>
    </source>
</reference>
<reference key="3">
    <citation type="journal article" date="2004" name="Genome Res.">
        <title>Whole genome sequence comparisons and 'full-length' cDNA sequences: a combined approach to evaluate and improve Arabidopsis genome annotation.</title>
        <authorList>
            <person name="Castelli V."/>
            <person name="Aury J.-M."/>
            <person name="Jaillon O."/>
            <person name="Wincker P."/>
            <person name="Clepet C."/>
            <person name="Menard M."/>
            <person name="Cruaud C."/>
            <person name="Quetier F."/>
            <person name="Scarpelli C."/>
            <person name="Schaechter V."/>
            <person name="Temple G."/>
            <person name="Caboche M."/>
            <person name="Weissenbach J."/>
            <person name="Salanoubat M."/>
        </authorList>
    </citation>
    <scope>NUCLEOTIDE SEQUENCE [LARGE SCALE MRNA]</scope>
    <source>
        <strain>cv. Columbia</strain>
    </source>
</reference>
<reference key="4">
    <citation type="journal article" date="2008" name="PLoS ONE">
        <title>Sorting signals, N-terminal modifications and abundance of the chloroplast proteome.</title>
        <authorList>
            <person name="Zybailov B."/>
            <person name="Rutschow H."/>
            <person name="Friso G."/>
            <person name="Rudella A."/>
            <person name="Emanuelsson O."/>
            <person name="Sun Q."/>
            <person name="van Wijk K.J."/>
        </authorList>
    </citation>
    <scope>IDENTIFICATION BY MASS SPECTROMETRY</scope>
    <scope>SUBCELLULAR LOCATION [LARGE SCALE ANALYSIS]</scope>
</reference>
<reference key="5">
    <citation type="journal article" date="2016" name="Plant Cell">
        <title>The evolutionarily conserved protein PHOTOSYNTHESIS AFFECTED MUTANT71 is required for efficient manganese uptake at the thylakoid membrane in Arabidopsis.</title>
        <authorList>
            <person name="Schneider A."/>
            <person name="Steinberger I."/>
            <person name="Herdean A."/>
            <person name="Gandini C."/>
            <person name="Eisenhut M."/>
            <person name="Kurz S."/>
            <person name="Morper A."/>
            <person name="Hoecker N."/>
            <person name="Ruehle T."/>
            <person name="Labs M."/>
            <person name="Fluegge U.I."/>
            <person name="Geimer S."/>
            <person name="Schmidt S.B."/>
            <person name="Husted S."/>
            <person name="Weber A.P."/>
            <person name="Spetea C."/>
            <person name="Leister D."/>
        </authorList>
    </citation>
    <scope>IDENTIFICATION</scope>
</reference>
<dbReference type="EMBL" id="AL049656">
    <property type="protein sequence ID" value="CAB41117.1"/>
    <property type="status" value="ALT_SEQ"/>
    <property type="molecule type" value="Genomic_DNA"/>
</dbReference>
<dbReference type="EMBL" id="AL161536">
    <property type="protein sequence ID" value="CAB78401.1"/>
    <property type="status" value="ALT_SEQ"/>
    <property type="molecule type" value="Genomic_DNA"/>
</dbReference>
<dbReference type="EMBL" id="CP002687">
    <property type="protein sequence ID" value="AEE83299.1"/>
    <property type="molecule type" value="Genomic_DNA"/>
</dbReference>
<dbReference type="EMBL" id="BX827397">
    <property type="status" value="NOT_ANNOTATED_CDS"/>
    <property type="molecule type" value="mRNA"/>
</dbReference>
<dbReference type="PIR" id="T06661">
    <property type="entry name" value="T06661"/>
</dbReference>
<dbReference type="RefSeq" id="NP_193095.2">
    <molecule id="Q9T0H9-1"/>
    <property type="nucleotide sequence ID" value="NM_117433.5"/>
</dbReference>
<dbReference type="FunCoup" id="Q9T0H9">
    <property type="interactions" value="600"/>
</dbReference>
<dbReference type="STRING" id="3702.Q9T0H9"/>
<dbReference type="TCDB" id="2.A.106.1.7">
    <property type="family name" value="the ca(2+):h(+) antiporter-2 (caca2) family"/>
</dbReference>
<dbReference type="GlyGen" id="Q9T0H9">
    <property type="glycosylation" value="1 site"/>
</dbReference>
<dbReference type="PaxDb" id="3702-AT4G13590.2"/>
<dbReference type="EnsemblPlants" id="AT4G13590.1">
    <molecule id="Q9T0H9-1"/>
    <property type="protein sequence ID" value="AT4G13590.1"/>
    <property type="gene ID" value="AT4G13590"/>
</dbReference>
<dbReference type="GeneID" id="826992"/>
<dbReference type="Gramene" id="AT4G13590.1">
    <molecule id="Q9T0H9-1"/>
    <property type="protein sequence ID" value="AT4G13590.1"/>
    <property type="gene ID" value="AT4G13590"/>
</dbReference>
<dbReference type="KEGG" id="ath:AT4G13590"/>
<dbReference type="Araport" id="AT4G13590"/>
<dbReference type="TAIR" id="AT4G13590"/>
<dbReference type="eggNOG" id="KOG2881">
    <property type="taxonomic scope" value="Eukaryota"/>
</dbReference>
<dbReference type="HOGENOM" id="CLU_040186_1_0_1"/>
<dbReference type="InParanoid" id="Q9T0H9"/>
<dbReference type="OMA" id="LAMQFEK"/>
<dbReference type="PhylomeDB" id="Q9T0H9"/>
<dbReference type="PRO" id="PR:Q9T0H9"/>
<dbReference type="Proteomes" id="UP000006548">
    <property type="component" value="Chromosome 4"/>
</dbReference>
<dbReference type="ExpressionAtlas" id="Q9T0H9">
    <property type="expression patterns" value="baseline and differential"/>
</dbReference>
<dbReference type="GO" id="GO:0009507">
    <property type="term" value="C:chloroplast"/>
    <property type="evidence" value="ECO:0007005"/>
    <property type="project" value="TAIR"/>
</dbReference>
<dbReference type="GO" id="GO:0009941">
    <property type="term" value="C:chloroplast envelope"/>
    <property type="evidence" value="ECO:0000314"/>
    <property type="project" value="TAIR"/>
</dbReference>
<dbReference type="GO" id="GO:0009706">
    <property type="term" value="C:chloroplast inner membrane"/>
    <property type="evidence" value="ECO:0007005"/>
    <property type="project" value="TAIR"/>
</dbReference>
<dbReference type="GO" id="GO:0015085">
    <property type="term" value="F:calcium ion transmembrane transporter activity"/>
    <property type="evidence" value="ECO:0000316"/>
    <property type="project" value="TAIR"/>
</dbReference>
<dbReference type="GO" id="GO:0005384">
    <property type="term" value="F:manganese ion transmembrane transporter activity"/>
    <property type="evidence" value="ECO:0000316"/>
    <property type="project" value="TAIR"/>
</dbReference>
<dbReference type="GO" id="GO:0070588">
    <property type="term" value="P:calcium ion transmembrane transport"/>
    <property type="evidence" value="ECO:0000316"/>
    <property type="project" value="TAIR"/>
</dbReference>
<dbReference type="GO" id="GO:0019722">
    <property type="term" value="P:calcium-mediated signaling"/>
    <property type="evidence" value="ECO:0000270"/>
    <property type="project" value="TAIR"/>
</dbReference>
<dbReference type="GO" id="GO:0071421">
    <property type="term" value="P:manganese ion transmembrane transport"/>
    <property type="evidence" value="ECO:0000316"/>
    <property type="project" value="TAIR"/>
</dbReference>
<dbReference type="InterPro" id="IPR001727">
    <property type="entry name" value="GDT1-like"/>
</dbReference>
<dbReference type="InterPro" id="IPR049555">
    <property type="entry name" value="GDT1-like_CS"/>
</dbReference>
<dbReference type="PANTHER" id="PTHR12608:SF7">
    <property type="entry name" value="PROTEIN PAM71-HOMOLOG, CHLOROPLASTIC"/>
    <property type="match status" value="1"/>
</dbReference>
<dbReference type="PANTHER" id="PTHR12608">
    <property type="entry name" value="TRANSMEMBRANE PROTEIN HTP-1 RELATED"/>
    <property type="match status" value="1"/>
</dbReference>
<dbReference type="Pfam" id="PF01169">
    <property type="entry name" value="GDT1"/>
    <property type="match status" value="2"/>
</dbReference>
<dbReference type="PROSITE" id="PS01214">
    <property type="entry name" value="UPF0016"/>
    <property type="match status" value="1"/>
</dbReference>
<feature type="transit peptide" description="Chloroplast" evidence="2">
    <location>
        <begin position="1"/>
        <end position="66"/>
    </location>
</feature>
<feature type="chain" id="PRO_0000398765" description="Protein PAM71-homolog, chloroplastic">
    <location>
        <begin position="67"/>
        <end position="359"/>
    </location>
</feature>
<feature type="transmembrane region" description="Helical" evidence="2">
    <location>
        <begin position="110"/>
        <end position="130"/>
    </location>
</feature>
<feature type="transmembrane region" description="Helical" evidence="2">
    <location>
        <begin position="149"/>
        <end position="169"/>
    </location>
</feature>
<feature type="transmembrane region" description="Helical" evidence="2">
    <location>
        <begin position="177"/>
        <end position="197"/>
    </location>
</feature>
<feature type="transmembrane region" description="Helical" evidence="2">
    <location>
        <begin position="207"/>
        <end position="227"/>
    </location>
</feature>
<feature type="transmembrane region" description="Helical" evidence="2">
    <location>
        <begin position="269"/>
        <end position="289"/>
    </location>
</feature>
<feature type="transmembrane region" description="Helical" evidence="2">
    <location>
        <begin position="311"/>
        <end position="331"/>
    </location>
</feature>
<feature type="transmembrane region" description="Helical" evidence="2">
    <location>
        <begin position="339"/>
        <end position="359"/>
    </location>
</feature>
<feature type="region of interest" description="Disordered" evidence="3">
    <location>
        <begin position="71"/>
        <end position="102"/>
    </location>
</feature>
<feature type="compositionally biased region" description="Low complexity" evidence="3">
    <location>
        <begin position="85"/>
        <end position="98"/>
    </location>
</feature>
<protein>
    <recommendedName>
        <fullName evidence="5">Protein PAM71-homolog, chloroplastic</fullName>
    </recommendedName>
    <alternativeName>
        <fullName evidence="6">GDT1-like protein 2</fullName>
    </alternativeName>
    <alternativeName>
        <fullName evidence="5">PHOTOSYNTHESIS AFFECTED MUTANT71-homolog</fullName>
    </alternativeName>
</protein>
<evidence type="ECO:0000250" key="1">
    <source>
        <dbReference type="UniProtKB" id="Q94AX5"/>
    </source>
</evidence>
<evidence type="ECO:0000255" key="2"/>
<evidence type="ECO:0000256" key="3">
    <source>
        <dbReference type="SAM" id="MobiDB-lite"/>
    </source>
</evidence>
<evidence type="ECO:0000269" key="4">
    <source>
    </source>
</evidence>
<evidence type="ECO:0000303" key="5">
    <source>
    </source>
</evidence>
<evidence type="ECO:0000305" key="6"/>
<evidence type="ECO:0000312" key="7">
    <source>
        <dbReference type="Araport" id="AT4G13590"/>
    </source>
</evidence>
<evidence type="ECO:0000312" key="8">
    <source>
        <dbReference type="EMBL" id="CAB41117.1"/>
    </source>
</evidence>
<accession>Q9T0H9</accession>
<gene>
    <name evidence="5" type="primary">PAM71-HL</name>
    <name evidence="7" type="ordered locus">At4g13590</name>
    <name evidence="8" type="ORF">T6G15.140</name>
</gene>
<organism>
    <name type="scientific">Arabidopsis thaliana</name>
    <name type="common">Mouse-ear cress</name>
    <dbReference type="NCBI Taxonomy" id="3702"/>
    <lineage>
        <taxon>Eukaryota</taxon>
        <taxon>Viridiplantae</taxon>
        <taxon>Streptophyta</taxon>
        <taxon>Embryophyta</taxon>
        <taxon>Tracheophyta</taxon>
        <taxon>Spermatophyta</taxon>
        <taxon>Magnoliopsida</taxon>
        <taxon>eudicotyledons</taxon>
        <taxon>Gunneridae</taxon>
        <taxon>Pentapetalae</taxon>
        <taxon>rosids</taxon>
        <taxon>malvids</taxon>
        <taxon>Brassicales</taxon>
        <taxon>Brassicaceae</taxon>
        <taxon>Camelineae</taxon>
        <taxon>Arabidopsis</taxon>
    </lineage>
</organism>
<sequence length="359" mass="37929">MKLTSLSKNANSTATAVTVSSIQKLPFLSLSETLPCPKSSRKPTFLPLRCRRRPKLDLLWGKFRVRASDAGVGSGSYSGGEEDGSQSSSLDQSPATSSESLKPRGPFPYSLSIALVLLSCGLVFSLITFVKGGPSSVLAAVAKSGFTAAFSLIFVSEIGDKTFFIAALLAMQYEKTLVLLGSMGALSLMTILSVVIGKIFQSVPAQFQTTLPIGEYAAIALLMFFGLKSIKDAWDLPPVEAKNGEETGIELGEYSEAEELVKEKASKKLTNPLEILWKSFSLVFFAEWGDRSMLATVALGAAQSPLGVASGAIAGHLVATVLAIMGGAFLANYISEKLVGYVGGALFLVFAAATFFGVF</sequence>
<name>PA71H_ARATH</name>
<proteinExistence type="evidence at protein level"/>
<comment type="function">
    <text evidence="1">Probable chloroplast-localized Mn(2+)/H(+) and/or Ca(2+)/H(+) antiporter regulating Ca(2+), Mn(2+) and pH homeostasis.</text>
</comment>
<comment type="subcellular location">
    <subcellularLocation>
        <location evidence="4">Plastid</location>
        <location evidence="4">Chloroplast membrane</location>
        <topology evidence="2">Multi-pass membrane protein</topology>
    </subcellularLocation>
</comment>
<comment type="alternative products">
    <event type="alternative splicing"/>
    <isoform>
        <id>Q9T0H9-1</id>
        <name>1</name>
        <sequence type="displayed"/>
    </isoform>
    <text>A number of isoforms are produced. According to EST sequences.</text>
</comment>
<comment type="similarity">
    <text evidence="6">Belongs to the GDT1 family.</text>
</comment>
<comment type="sequence caution" evidence="6">
    <conflict type="miscellaneous discrepancy">
        <sequence resource="EMBL" id="BX827397"/>
    </conflict>
    <text>Sequencing errors.</text>
</comment>
<comment type="sequence caution" evidence="6">
    <conflict type="erroneous gene model prediction">
        <sequence resource="EMBL-CDS" id="CAB41117"/>
    </conflict>
</comment>
<comment type="sequence caution" evidence="6">
    <conflict type="erroneous gene model prediction">
        <sequence resource="EMBL-CDS" id="CAB78401"/>
    </conflict>
</comment>